<feature type="chain" id="PRO_0000335452" description="Translation initiation factor IF-2">
    <location>
        <begin position="1"/>
        <end position="1011"/>
    </location>
</feature>
<feature type="domain" description="tr-type G">
    <location>
        <begin position="502"/>
        <end position="678"/>
    </location>
</feature>
<feature type="region of interest" description="Disordered" evidence="3">
    <location>
        <begin position="49"/>
        <end position="152"/>
    </location>
</feature>
<feature type="region of interest" description="Disordered" evidence="3">
    <location>
        <begin position="187"/>
        <end position="407"/>
    </location>
</feature>
<feature type="region of interest" description="G1" evidence="1">
    <location>
        <begin position="511"/>
        <end position="518"/>
    </location>
</feature>
<feature type="region of interest" description="G2" evidence="1">
    <location>
        <begin position="536"/>
        <end position="540"/>
    </location>
</feature>
<feature type="region of interest" description="G3" evidence="1">
    <location>
        <begin position="564"/>
        <end position="567"/>
    </location>
</feature>
<feature type="region of interest" description="G4" evidence="1">
    <location>
        <begin position="618"/>
        <end position="621"/>
    </location>
</feature>
<feature type="region of interest" description="G5" evidence="1">
    <location>
        <begin position="654"/>
        <end position="656"/>
    </location>
</feature>
<feature type="compositionally biased region" description="Basic and acidic residues" evidence="3">
    <location>
        <begin position="49"/>
        <end position="77"/>
    </location>
</feature>
<feature type="compositionally biased region" description="Pro residues" evidence="3">
    <location>
        <begin position="93"/>
        <end position="104"/>
    </location>
</feature>
<feature type="compositionally biased region" description="Low complexity" evidence="3">
    <location>
        <begin position="105"/>
        <end position="115"/>
    </location>
</feature>
<feature type="compositionally biased region" description="Pro residues" evidence="3">
    <location>
        <begin position="116"/>
        <end position="126"/>
    </location>
</feature>
<feature type="compositionally biased region" description="Low complexity" evidence="3">
    <location>
        <begin position="187"/>
        <end position="212"/>
    </location>
</feature>
<feature type="compositionally biased region" description="Low complexity" evidence="3">
    <location>
        <begin position="228"/>
        <end position="242"/>
    </location>
</feature>
<feature type="compositionally biased region" description="Pro residues" evidence="3">
    <location>
        <begin position="243"/>
        <end position="252"/>
    </location>
</feature>
<feature type="compositionally biased region" description="Pro residues" evidence="3">
    <location>
        <begin position="276"/>
        <end position="290"/>
    </location>
</feature>
<feature type="compositionally biased region" description="Gly residues" evidence="3">
    <location>
        <begin position="316"/>
        <end position="329"/>
    </location>
</feature>
<feature type="compositionally biased region" description="Low complexity" evidence="3">
    <location>
        <begin position="361"/>
        <end position="380"/>
    </location>
</feature>
<feature type="binding site" evidence="2">
    <location>
        <begin position="511"/>
        <end position="518"/>
    </location>
    <ligand>
        <name>GTP</name>
        <dbReference type="ChEBI" id="CHEBI:37565"/>
    </ligand>
</feature>
<feature type="binding site" evidence="2">
    <location>
        <begin position="564"/>
        <end position="568"/>
    </location>
    <ligand>
        <name>GTP</name>
        <dbReference type="ChEBI" id="CHEBI:37565"/>
    </ligand>
</feature>
<feature type="binding site" evidence="2">
    <location>
        <begin position="618"/>
        <end position="621"/>
    </location>
    <ligand>
        <name>GTP</name>
        <dbReference type="ChEBI" id="CHEBI:37565"/>
    </ligand>
</feature>
<accession>Q1IIT3</accession>
<dbReference type="EMBL" id="CP000360">
    <property type="protein sequence ID" value="ABF43217.1"/>
    <property type="molecule type" value="Genomic_DNA"/>
</dbReference>
<dbReference type="RefSeq" id="WP_011525016.1">
    <property type="nucleotide sequence ID" value="NC_008009.1"/>
</dbReference>
<dbReference type="SMR" id="Q1IIT3"/>
<dbReference type="STRING" id="204669.Acid345_4217"/>
<dbReference type="EnsemblBacteria" id="ABF43217">
    <property type="protein sequence ID" value="ABF43217"/>
    <property type="gene ID" value="Acid345_4217"/>
</dbReference>
<dbReference type="KEGG" id="aba:Acid345_4217"/>
<dbReference type="eggNOG" id="COG0532">
    <property type="taxonomic scope" value="Bacteria"/>
</dbReference>
<dbReference type="HOGENOM" id="CLU_006301_5_1_0"/>
<dbReference type="OrthoDB" id="9811804at2"/>
<dbReference type="Proteomes" id="UP000002432">
    <property type="component" value="Chromosome"/>
</dbReference>
<dbReference type="GO" id="GO:0005829">
    <property type="term" value="C:cytosol"/>
    <property type="evidence" value="ECO:0007669"/>
    <property type="project" value="TreeGrafter"/>
</dbReference>
<dbReference type="GO" id="GO:0005525">
    <property type="term" value="F:GTP binding"/>
    <property type="evidence" value="ECO:0007669"/>
    <property type="project" value="UniProtKB-KW"/>
</dbReference>
<dbReference type="GO" id="GO:0003924">
    <property type="term" value="F:GTPase activity"/>
    <property type="evidence" value="ECO:0007669"/>
    <property type="project" value="UniProtKB-UniRule"/>
</dbReference>
<dbReference type="GO" id="GO:0003743">
    <property type="term" value="F:translation initiation factor activity"/>
    <property type="evidence" value="ECO:0007669"/>
    <property type="project" value="UniProtKB-UniRule"/>
</dbReference>
<dbReference type="CDD" id="cd01887">
    <property type="entry name" value="IF2_eIF5B"/>
    <property type="match status" value="1"/>
</dbReference>
<dbReference type="CDD" id="cd03702">
    <property type="entry name" value="IF2_mtIF2_II"/>
    <property type="match status" value="1"/>
</dbReference>
<dbReference type="CDD" id="cd03692">
    <property type="entry name" value="mtIF2_IVc"/>
    <property type="match status" value="1"/>
</dbReference>
<dbReference type="FunFam" id="2.40.30.10:FF:000007">
    <property type="entry name" value="Translation initiation factor IF-2"/>
    <property type="match status" value="1"/>
</dbReference>
<dbReference type="FunFam" id="2.40.30.10:FF:000008">
    <property type="entry name" value="Translation initiation factor IF-2"/>
    <property type="match status" value="1"/>
</dbReference>
<dbReference type="FunFam" id="3.40.50.10050:FF:000001">
    <property type="entry name" value="Translation initiation factor IF-2"/>
    <property type="match status" value="1"/>
</dbReference>
<dbReference type="FunFam" id="3.40.50.300:FF:000019">
    <property type="entry name" value="Translation initiation factor IF-2"/>
    <property type="match status" value="1"/>
</dbReference>
<dbReference type="Gene3D" id="1.10.10.2480">
    <property type="match status" value="1"/>
</dbReference>
<dbReference type="Gene3D" id="3.40.50.300">
    <property type="entry name" value="P-loop containing nucleotide triphosphate hydrolases"/>
    <property type="match status" value="1"/>
</dbReference>
<dbReference type="Gene3D" id="2.40.30.10">
    <property type="entry name" value="Translation factors"/>
    <property type="match status" value="2"/>
</dbReference>
<dbReference type="Gene3D" id="3.40.50.10050">
    <property type="entry name" value="Translation initiation factor IF- 2, domain 3"/>
    <property type="match status" value="1"/>
</dbReference>
<dbReference type="HAMAP" id="MF_00100_B">
    <property type="entry name" value="IF_2_B"/>
    <property type="match status" value="1"/>
</dbReference>
<dbReference type="InterPro" id="IPR053905">
    <property type="entry name" value="EF-G-like_DII"/>
</dbReference>
<dbReference type="InterPro" id="IPR004161">
    <property type="entry name" value="EFTu-like_2"/>
</dbReference>
<dbReference type="InterPro" id="IPR044145">
    <property type="entry name" value="IF2_II"/>
</dbReference>
<dbReference type="InterPro" id="IPR006847">
    <property type="entry name" value="IF2_N"/>
</dbReference>
<dbReference type="InterPro" id="IPR027417">
    <property type="entry name" value="P-loop_NTPase"/>
</dbReference>
<dbReference type="InterPro" id="IPR005225">
    <property type="entry name" value="Small_GTP-bd"/>
</dbReference>
<dbReference type="InterPro" id="IPR000795">
    <property type="entry name" value="T_Tr_GTP-bd_dom"/>
</dbReference>
<dbReference type="InterPro" id="IPR000178">
    <property type="entry name" value="TF_IF2_bacterial-like"/>
</dbReference>
<dbReference type="InterPro" id="IPR015760">
    <property type="entry name" value="TIF_IF2"/>
</dbReference>
<dbReference type="InterPro" id="IPR023115">
    <property type="entry name" value="TIF_IF2_dom3"/>
</dbReference>
<dbReference type="InterPro" id="IPR036925">
    <property type="entry name" value="TIF_IF2_dom3_sf"/>
</dbReference>
<dbReference type="InterPro" id="IPR009000">
    <property type="entry name" value="Transl_B-barrel_sf"/>
</dbReference>
<dbReference type="NCBIfam" id="TIGR00487">
    <property type="entry name" value="IF-2"/>
    <property type="match status" value="1"/>
</dbReference>
<dbReference type="NCBIfam" id="TIGR00231">
    <property type="entry name" value="small_GTP"/>
    <property type="match status" value="1"/>
</dbReference>
<dbReference type="PANTHER" id="PTHR43381:SF5">
    <property type="entry name" value="TR-TYPE G DOMAIN-CONTAINING PROTEIN"/>
    <property type="match status" value="1"/>
</dbReference>
<dbReference type="PANTHER" id="PTHR43381">
    <property type="entry name" value="TRANSLATION INITIATION FACTOR IF-2-RELATED"/>
    <property type="match status" value="1"/>
</dbReference>
<dbReference type="Pfam" id="PF22042">
    <property type="entry name" value="EF-G_D2"/>
    <property type="match status" value="1"/>
</dbReference>
<dbReference type="Pfam" id="PF00009">
    <property type="entry name" value="GTP_EFTU"/>
    <property type="match status" value="1"/>
</dbReference>
<dbReference type="Pfam" id="PF03144">
    <property type="entry name" value="GTP_EFTU_D2"/>
    <property type="match status" value="1"/>
</dbReference>
<dbReference type="Pfam" id="PF11987">
    <property type="entry name" value="IF-2"/>
    <property type="match status" value="1"/>
</dbReference>
<dbReference type="Pfam" id="PF04760">
    <property type="entry name" value="IF2_N"/>
    <property type="match status" value="2"/>
</dbReference>
<dbReference type="PRINTS" id="PR00315">
    <property type="entry name" value="ELONGATNFCT"/>
</dbReference>
<dbReference type="SUPFAM" id="SSF52156">
    <property type="entry name" value="Initiation factor IF2/eIF5b, domain 3"/>
    <property type="match status" value="1"/>
</dbReference>
<dbReference type="SUPFAM" id="SSF52540">
    <property type="entry name" value="P-loop containing nucleoside triphosphate hydrolases"/>
    <property type="match status" value="1"/>
</dbReference>
<dbReference type="SUPFAM" id="SSF50447">
    <property type="entry name" value="Translation proteins"/>
    <property type="match status" value="2"/>
</dbReference>
<dbReference type="PROSITE" id="PS51722">
    <property type="entry name" value="G_TR_2"/>
    <property type="match status" value="1"/>
</dbReference>
<dbReference type="PROSITE" id="PS01176">
    <property type="entry name" value="IF2"/>
    <property type="match status" value="1"/>
</dbReference>
<reference key="1">
    <citation type="journal article" date="2009" name="Appl. Environ. Microbiol.">
        <title>Three genomes from the phylum Acidobacteria provide insight into the lifestyles of these microorganisms in soils.</title>
        <authorList>
            <person name="Ward N.L."/>
            <person name="Challacombe J.F."/>
            <person name="Janssen P.H."/>
            <person name="Henrissat B."/>
            <person name="Coutinho P.M."/>
            <person name="Wu M."/>
            <person name="Xie G."/>
            <person name="Haft D.H."/>
            <person name="Sait M."/>
            <person name="Badger J."/>
            <person name="Barabote R.D."/>
            <person name="Bradley B."/>
            <person name="Brettin T.S."/>
            <person name="Brinkac L.M."/>
            <person name="Bruce D."/>
            <person name="Creasy T."/>
            <person name="Daugherty S.C."/>
            <person name="Davidsen T.M."/>
            <person name="DeBoy R.T."/>
            <person name="Detter J.C."/>
            <person name="Dodson R.J."/>
            <person name="Durkin A.S."/>
            <person name="Ganapathy A."/>
            <person name="Gwinn-Giglio M."/>
            <person name="Han C.S."/>
            <person name="Khouri H."/>
            <person name="Kiss H."/>
            <person name="Kothari S.P."/>
            <person name="Madupu R."/>
            <person name="Nelson K.E."/>
            <person name="Nelson W.C."/>
            <person name="Paulsen I."/>
            <person name="Penn K."/>
            <person name="Ren Q."/>
            <person name="Rosovitz M.J."/>
            <person name="Selengut J.D."/>
            <person name="Shrivastava S."/>
            <person name="Sullivan S.A."/>
            <person name="Tapia R."/>
            <person name="Thompson L.S."/>
            <person name="Watkins K.L."/>
            <person name="Yang Q."/>
            <person name="Yu C."/>
            <person name="Zafar N."/>
            <person name="Zhou L."/>
            <person name="Kuske C.R."/>
        </authorList>
    </citation>
    <scope>NUCLEOTIDE SEQUENCE [LARGE SCALE GENOMIC DNA]</scope>
    <source>
        <strain>Ellin345</strain>
    </source>
</reference>
<keyword id="KW-0963">Cytoplasm</keyword>
<keyword id="KW-0342">GTP-binding</keyword>
<keyword id="KW-0396">Initiation factor</keyword>
<keyword id="KW-0547">Nucleotide-binding</keyword>
<keyword id="KW-0648">Protein biosynthesis</keyword>
<keyword id="KW-1185">Reference proteome</keyword>
<gene>
    <name evidence="2" type="primary">infB</name>
    <name type="ordered locus">Acid345_4217</name>
</gene>
<proteinExistence type="inferred from homology"/>
<comment type="function">
    <text evidence="2">One of the essential components for the initiation of protein synthesis. Protects formylmethionyl-tRNA from spontaneous hydrolysis and promotes its binding to the 30S ribosomal subunits. Also involved in the hydrolysis of GTP during the formation of the 70S ribosomal complex.</text>
</comment>
<comment type="subcellular location">
    <subcellularLocation>
        <location evidence="2">Cytoplasm</location>
    </subcellularLocation>
</comment>
<comment type="similarity">
    <text evidence="2">Belongs to the TRAFAC class translation factor GTPase superfamily. Classic translation factor GTPase family. IF-2 subfamily.</text>
</comment>
<name>IF2_KORVE</name>
<evidence type="ECO:0000250" key="1"/>
<evidence type="ECO:0000255" key="2">
    <source>
        <dbReference type="HAMAP-Rule" id="MF_00100"/>
    </source>
</evidence>
<evidence type="ECO:0000256" key="3">
    <source>
        <dbReference type="SAM" id="MobiDB-lite"/>
    </source>
</evidence>
<protein>
    <recommendedName>
        <fullName evidence="2">Translation initiation factor IF-2</fullName>
    </recommendedName>
</protein>
<sequence length="1011" mass="106830">MKIRINDLARELEVKSKAILDALTKVGVTEKKTHSSSIEDHEAVLVKKYIHEHGTEESPRRRSAGEDEFKPKIDLSKISKPGDVLKALTQKAAPPPPPPPPPRPAVKAPSPVSQEPRPPAVPPAPQKPAVFARPASETVHTPPEPPKPRFITPASVAAQRPVITPPKPPVPPAPPVAVAPPAVIEPAAPAEEPKAAAPATTAPEAPEVKAPVSPERVAPAADTGAHVTAKPEAPAAPGAATPAPTPGRPLPGVPLRQQTPGRRMIVPQTGPRPVYSAPPPAPPRPTPPPQMSQGAGTRPGMPVRGQPIFQRRPQSGPGGGSGGPGGFQRPGGPPRPGDRPRGPHPTRQFPSGPRPMGGIGLAPPGAPANKPAGRPAPARRPGQRYVPRGQKEGPMKGFVPPPRLSLSNEPLPITRNITISEGISVKDLAEKLGIRAKDLIARLLARGVFATVNQTLEASLASEMANHFGASTDVITFEDQLAQETAKAAGETPEEAAANAVVRPPVVTIMGHVDHGKTSLLDAIRATDVAGGEAGGITQHIGAYKVAIGDPNSPAFGREIVFLDTPGHEAFTRMRARGSKITDIVVIVVAADDGVMPQTVEAIDHARAANVPIIVAVNKIDKPDAMPERVKKQLADRGLMPEDWGGNTVFVDVSAKQKTNLNLLMEMICLVADLGDLKANPDRMASGTVVEAKLDRGRGPVATVLVQNGTLRTSDNFVVGNAFGKVRAMFNDRGVSLDTAGPSTPVEIIGLETLPQAGDQFTVVADREKARDISEYREGRAREAQLAKSSRVSLEGLAEQLKTAGQKDLPIILKGDVQGSVEVLNDLLSKMSTEKVKITMIRSGVGAITESDVLLASASNAIIIGFNVRPERKAQELAVQEGVDIRLHSIIYELQDEMKKAMLGLLEPIIKETYQGRADVKDTFRIPKVGTIAGCQVADGIIKRDSHVRLVRDNVVIYTGKIGSLKRFKDDASEVRNGMECGIGIAGYGDIRSGDVIEAFTSEKIAADSLH</sequence>
<organism>
    <name type="scientific">Koribacter versatilis (strain Ellin345)</name>
    <dbReference type="NCBI Taxonomy" id="204669"/>
    <lineage>
        <taxon>Bacteria</taxon>
        <taxon>Pseudomonadati</taxon>
        <taxon>Acidobacteriota</taxon>
        <taxon>Terriglobia</taxon>
        <taxon>Terriglobales</taxon>
        <taxon>Candidatus Korobacteraceae</taxon>
        <taxon>Candidatus Korobacter</taxon>
    </lineage>
</organism>